<name>MUTL_SHELP</name>
<proteinExistence type="inferred from homology"/>
<reference key="1">
    <citation type="submission" date="2007-03" db="EMBL/GenBank/DDBJ databases">
        <title>Complete sequence of Shewanella loihica PV-4.</title>
        <authorList>
            <consortium name="US DOE Joint Genome Institute"/>
            <person name="Copeland A."/>
            <person name="Lucas S."/>
            <person name="Lapidus A."/>
            <person name="Barry K."/>
            <person name="Detter J.C."/>
            <person name="Glavina del Rio T."/>
            <person name="Hammon N."/>
            <person name="Israni S."/>
            <person name="Dalin E."/>
            <person name="Tice H."/>
            <person name="Pitluck S."/>
            <person name="Chain P."/>
            <person name="Malfatti S."/>
            <person name="Shin M."/>
            <person name="Vergez L."/>
            <person name="Schmutz J."/>
            <person name="Larimer F."/>
            <person name="Land M."/>
            <person name="Hauser L."/>
            <person name="Kyrpides N."/>
            <person name="Mikhailova N."/>
            <person name="Romine M.F."/>
            <person name="Serres G."/>
            <person name="Fredrickson J."/>
            <person name="Tiedje J."/>
            <person name="Richardson P."/>
        </authorList>
    </citation>
    <scope>NUCLEOTIDE SEQUENCE [LARGE SCALE GENOMIC DNA]</scope>
    <source>
        <strain>ATCC BAA-1088 / PV-4</strain>
    </source>
</reference>
<protein>
    <recommendedName>
        <fullName evidence="1">DNA mismatch repair protein MutL</fullName>
    </recommendedName>
</protein>
<dbReference type="EMBL" id="CP000606">
    <property type="protein sequence ID" value="ABO22436.1"/>
    <property type="molecule type" value="Genomic_DNA"/>
</dbReference>
<dbReference type="RefSeq" id="WP_011864370.1">
    <property type="nucleotide sequence ID" value="NC_009092.1"/>
</dbReference>
<dbReference type="SMR" id="A3QAD8"/>
<dbReference type="STRING" id="323850.Shew_0564"/>
<dbReference type="KEGG" id="slo:Shew_0564"/>
<dbReference type="eggNOG" id="COG0323">
    <property type="taxonomic scope" value="Bacteria"/>
</dbReference>
<dbReference type="HOGENOM" id="CLU_004131_5_1_6"/>
<dbReference type="OrthoDB" id="9763467at2"/>
<dbReference type="Proteomes" id="UP000001558">
    <property type="component" value="Chromosome"/>
</dbReference>
<dbReference type="GO" id="GO:0032300">
    <property type="term" value="C:mismatch repair complex"/>
    <property type="evidence" value="ECO:0007669"/>
    <property type="project" value="InterPro"/>
</dbReference>
<dbReference type="GO" id="GO:0005524">
    <property type="term" value="F:ATP binding"/>
    <property type="evidence" value="ECO:0007669"/>
    <property type="project" value="InterPro"/>
</dbReference>
<dbReference type="GO" id="GO:0016887">
    <property type="term" value="F:ATP hydrolysis activity"/>
    <property type="evidence" value="ECO:0007669"/>
    <property type="project" value="InterPro"/>
</dbReference>
<dbReference type="GO" id="GO:0140664">
    <property type="term" value="F:ATP-dependent DNA damage sensor activity"/>
    <property type="evidence" value="ECO:0007669"/>
    <property type="project" value="InterPro"/>
</dbReference>
<dbReference type="GO" id="GO:0030983">
    <property type="term" value="F:mismatched DNA binding"/>
    <property type="evidence" value="ECO:0007669"/>
    <property type="project" value="InterPro"/>
</dbReference>
<dbReference type="GO" id="GO:0006298">
    <property type="term" value="P:mismatch repair"/>
    <property type="evidence" value="ECO:0007669"/>
    <property type="project" value="UniProtKB-UniRule"/>
</dbReference>
<dbReference type="CDD" id="cd16926">
    <property type="entry name" value="HATPase_MutL-MLH-PMS-like"/>
    <property type="match status" value="1"/>
</dbReference>
<dbReference type="CDD" id="cd03482">
    <property type="entry name" value="MutL_Trans_MutL"/>
    <property type="match status" value="1"/>
</dbReference>
<dbReference type="FunFam" id="3.30.230.10:FF:000013">
    <property type="entry name" value="DNA mismatch repair endonuclease MutL"/>
    <property type="match status" value="1"/>
</dbReference>
<dbReference type="FunFam" id="3.30.565.10:FF:000003">
    <property type="entry name" value="DNA mismatch repair endonuclease MutL"/>
    <property type="match status" value="1"/>
</dbReference>
<dbReference type="Gene3D" id="3.30.230.10">
    <property type="match status" value="1"/>
</dbReference>
<dbReference type="Gene3D" id="3.30.565.10">
    <property type="entry name" value="Histidine kinase-like ATPase, C-terminal domain"/>
    <property type="match status" value="1"/>
</dbReference>
<dbReference type="Gene3D" id="3.30.1370.100">
    <property type="entry name" value="MutL, C-terminal domain, regulatory subdomain"/>
    <property type="match status" value="1"/>
</dbReference>
<dbReference type="HAMAP" id="MF_00149">
    <property type="entry name" value="DNA_mis_repair"/>
    <property type="match status" value="1"/>
</dbReference>
<dbReference type="InterPro" id="IPR014762">
    <property type="entry name" value="DNA_mismatch_repair_CS"/>
</dbReference>
<dbReference type="InterPro" id="IPR020667">
    <property type="entry name" value="DNA_mismatch_repair_MutL"/>
</dbReference>
<dbReference type="InterPro" id="IPR013507">
    <property type="entry name" value="DNA_mismatch_S5_2-like"/>
</dbReference>
<dbReference type="InterPro" id="IPR036890">
    <property type="entry name" value="HATPase_C_sf"/>
</dbReference>
<dbReference type="InterPro" id="IPR002099">
    <property type="entry name" value="MutL/Mlh/PMS"/>
</dbReference>
<dbReference type="InterPro" id="IPR038973">
    <property type="entry name" value="MutL/Mlh/Pms-like"/>
</dbReference>
<dbReference type="InterPro" id="IPR014790">
    <property type="entry name" value="MutL_C"/>
</dbReference>
<dbReference type="InterPro" id="IPR042121">
    <property type="entry name" value="MutL_C_regsub"/>
</dbReference>
<dbReference type="InterPro" id="IPR037198">
    <property type="entry name" value="MutL_C_sf"/>
</dbReference>
<dbReference type="InterPro" id="IPR020568">
    <property type="entry name" value="Ribosomal_Su5_D2-typ_SF"/>
</dbReference>
<dbReference type="InterPro" id="IPR014721">
    <property type="entry name" value="Ribsml_uS5_D2-typ_fold_subgr"/>
</dbReference>
<dbReference type="NCBIfam" id="TIGR00585">
    <property type="entry name" value="mutl"/>
    <property type="match status" value="1"/>
</dbReference>
<dbReference type="NCBIfam" id="NF000948">
    <property type="entry name" value="PRK00095.1-1"/>
    <property type="match status" value="1"/>
</dbReference>
<dbReference type="PANTHER" id="PTHR10073">
    <property type="entry name" value="DNA MISMATCH REPAIR PROTEIN MLH, PMS, MUTL"/>
    <property type="match status" value="1"/>
</dbReference>
<dbReference type="PANTHER" id="PTHR10073:SF12">
    <property type="entry name" value="DNA MISMATCH REPAIR PROTEIN MLH1"/>
    <property type="match status" value="1"/>
</dbReference>
<dbReference type="Pfam" id="PF01119">
    <property type="entry name" value="DNA_mis_repair"/>
    <property type="match status" value="1"/>
</dbReference>
<dbReference type="Pfam" id="PF13589">
    <property type="entry name" value="HATPase_c_3"/>
    <property type="match status" value="1"/>
</dbReference>
<dbReference type="Pfam" id="PF08676">
    <property type="entry name" value="MutL_C"/>
    <property type="match status" value="1"/>
</dbReference>
<dbReference type="SMART" id="SM01340">
    <property type="entry name" value="DNA_mis_repair"/>
    <property type="match status" value="1"/>
</dbReference>
<dbReference type="SMART" id="SM00853">
    <property type="entry name" value="MutL_C"/>
    <property type="match status" value="1"/>
</dbReference>
<dbReference type="SUPFAM" id="SSF55874">
    <property type="entry name" value="ATPase domain of HSP90 chaperone/DNA topoisomerase II/histidine kinase"/>
    <property type="match status" value="1"/>
</dbReference>
<dbReference type="SUPFAM" id="SSF118116">
    <property type="entry name" value="DNA mismatch repair protein MutL"/>
    <property type="match status" value="1"/>
</dbReference>
<dbReference type="SUPFAM" id="SSF54211">
    <property type="entry name" value="Ribosomal protein S5 domain 2-like"/>
    <property type="match status" value="1"/>
</dbReference>
<dbReference type="PROSITE" id="PS00058">
    <property type="entry name" value="DNA_MISMATCH_REPAIR_1"/>
    <property type="match status" value="1"/>
</dbReference>
<gene>
    <name evidence="1" type="primary">mutL</name>
    <name type="ordered locus">Shew_0564</name>
</gene>
<comment type="function">
    <text evidence="1">This protein is involved in the repair of mismatches in DNA. It is required for dam-dependent methyl-directed DNA mismatch repair. May act as a 'molecular matchmaker', a protein that promotes the formation of a stable complex between two or more DNA-binding proteins in an ATP-dependent manner without itself being part of a final effector complex.</text>
</comment>
<comment type="similarity">
    <text evidence="1">Belongs to the DNA mismatch repair MutL/HexB family.</text>
</comment>
<organism>
    <name type="scientific">Shewanella loihica (strain ATCC BAA-1088 / PV-4)</name>
    <dbReference type="NCBI Taxonomy" id="323850"/>
    <lineage>
        <taxon>Bacteria</taxon>
        <taxon>Pseudomonadati</taxon>
        <taxon>Pseudomonadota</taxon>
        <taxon>Gammaproteobacteria</taxon>
        <taxon>Alteromonadales</taxon>
        <taxon>Shewanellaceae</taxon>
        <taxon>Shewanella</taxon>
    </lineage>
</organism>
<evidence type="ECO:0000255" key="1">
    <source>
        <dbReference type="HAMAP-Rule" id="MF_00149"/>
    </source>
</evidence>
<evidence type="ECO:0000256" key="2">
    <source>
        <dbReference type="SAM" id="MobiDB-lite"/>
    </source>
</evidence>
<accession>A3QAD8</accession>
<feature type="chain" id="PRO_1000076714" description="DNA mismatch repair protein MutL">
    <location>
        <begin position="1"/>
        <end position="631"/>
    </location>
</feature>
<feature type="region of interest" description="Disordered" evidence="2">
    <location>
        <begin position="389"/>
        <end position="423"/>
    </location>
</feature>
<keyword id="KW-0227">DNA damage</keyword>
<keyword id="KW-0234">DNA repair</keyword>
<keyword id="KW-1185">Reference proteome</keyword>
<sequence>MTIRILPPQLANQIAAGEVVERPASVIKELVENSLDAGATRVDIEIDKGGSKLIKITDNGSGIPKEELSLALSRHATSKLASLDDLDAILSFGFRGEALASISSVSRLTLTSRTQEQSEAWQAYAEGSEMAVRVIPAAHPVGSTVEAADLFFNTPARRRFLKSDKTEFTHIDEWLKRIALVRSEIHFTLKHNGKQVRNYRPAKTEAQYLQRLAQVSGKAFADNALRVDCNHNGLSLSGYIQSPFSEMAVGDTQYFYVNGRLVRDRLVNHAVRQAFAQQLQGEQVAFVLMLNLDPHQVDVNVHPAKHEVRFHESRYVHDFILQALESALRQSSELAFEAALDTQVTDQNRSASYIRPLQTQQSDTGSNQIAHGDTEENALWLANERPAYGEREASRQAGGQRVQETQMSSYGSGQSGGRGRSYASTELPSQAAVDSYAQLMTTPGVSSQANQADDSHLPPMPQVLDGQYWLLVRGSELALLSLSCAAREVTRREIEAKLDAGLIGQPLLMPVSVKVDEDWQQTLVERELLVRKLGLELTIRLGQLIIKKVPPYLRQSQLASVIPEFLQWIRFEEPTTEALVNWLVNQSGEQFNSASRLWAGLMGLPESQQQEILSLAKVMPWQTWLGEQTSE</sequence>